<comment type="function">
    <text evidence="1 2">Class II ribonuclease (RNase) (By similarity). Binds to cytokinins (By similarity). Interacts with melatonin (By similarity).</text>
</comment>
<comment type="subcellular location">
    <subcellularLocation>
        <location evidence="2">Cytoplasm</location>
        <location evidence="2">Cytosol</location>
    </subcellularLocation>
</comment>
<comment type="allergen">
    <text evidence="4">Causes an allergic reaction in human.</text>
</comment>
<comment type="similarity">
    <text evidence="4">Belongs to the BetVI family.</text>
</comment>
<gene>
    <name evidence="3" type="primary">PR10.2E</name>
</gene>
<proteinExistence type="evidence at transcript level"/>
<protein>
    <recommendedName>
        <fullName evidence="3">Class 10 plant pathogenesis-related protein 2E</fullName>
        <shortName evidence="3">Llpr10.2e</shortName>
        <shortName evidence="3">Ypr-10.2e</shortName>
        <ecNumber evidence="1">3.1.27.-</ecNumber>
    </recommendedName>
    <allergenName evidence="4">Lup l 4</allergenName>
</protein>
<dbReference type="EC" id="3.1.27.-" evidence="1"/>
<dbReference type="EMBL" id="AY288355">
    <property type="protein sequence ID" value="AAP37978.1"/>
    <property type="molecule type" value="mRNA"/>
</dbReference>
<dbReference type="SMR" id="Q7Y1W5"/>
<dbReference type="Allergome" id="9727">
    <property type="allergen name" value="Lup l 4"/>
</dbReference>
<dbReference type="GO" id="GO:0005829">
    <property type="term" value="C:cytosol"/>
    <property type="evidence" value="ECO:0007669"/>
    <property type="project" value="UniProtKB-SubCell"/>
</dbReference>
<dbReference type="GO" id="GO:0005634">
    <property type="term" value="C:nucleus"/>
    <property type="evidence" value="ECO:0007669"/>
    <property type="project" value="TreeGrafter"/>
</dbReference>
<dbReference type="GO" id="GO:0010427">
    <property type="term" value="F:abscisic acid binding"/>
    <property type="evidence" value="ECO:0007669"/>
    <property type="project" value="InterPro"/>
</dbReference>
<dbReference type="GO" id="GO:0005509">
    <property type="term" value="F:calcium ion binding"/>
    <property type="evidence" value="ECO:0000250"/>
    <property type="project" value="UniProtKB"/>
</dbReference>
<dbReference type="GO" id="GO:0044373">
    <property type="term" value="F:cytokinin binding"/>
    <property type="evidence" value="ECO:0000250"/>
    <property type="project" value="UniProtKB"/>
</dbReference>
<dbReference type="GO" id="GO:1904408">
    <property type="term" value="F:melatonin binding"/>
    <property type="evidence" value="ECO:0000250"/>
    <property type="project" value="UniProtKB"/>
</dbReference>
<dbReference type="GO" id="GO:0004864">
    <property type="term" value="F:protein phosphatase inhibitor activity"/>
    <property type="evidence" value="ECO:0007669"/>
    <property type="project" value="InterPro"/>
</dbReference>
<dbReference type="GO" id="GO:0004540">
    <property type="term" value="F:RNA nuclease activity"/>
    <property type="evidence" value="ECO:0000250"/>
    <property type="project" value="UniProtKB"/>
</dbReference>
<dbReference type="GO" id="GO:0038023">
    <property type="term" value="F:signaling receptor activity"/>
    <property type="evidence" value="ECO:0007669"/>
    <property type="project" value="InterPro"/>
</dbReference>
<dbReference type="GO" id="GO:0009738">
    <property type="term" value="P:abscisic acid-activated signaling pathway"/>
    <property type="evidence" value="ECO:0007669"/>
    <property type="project" value="InterPro"/>
</dbReference>
<dbReference type="GO" id="GO:0006952">
    <property type="term" value="P:defense response"/>
    <property type="evidence" value="ECO:0007669"/>
    <property type="project" value="UniProtKB-KW"/>
</dbReference>
<dbReference type="CDD" id="cd07816">
    <property type="entry name" value="Bet_v1-like"/>
    <property type="match status" value="1"/>
</dbReference>
<dbReference type="FunFam" id="3.30.530.20:FF:000007">
    <property type="entry name" value="Major pollen allergen Bet v 1-A"/>
    <property type="match status" value="1"/>
</dbReference>
<dbReference type="Gene3D" id="3.30.530.20">
    <property type="match status" value="1"/>
</dbReference>
<dbReference type="InterPro" id="IPR000916">
    <property type="entry name" value="Bet_v_I/MLP"/>
</dbReference>
<dbReference type="InterPro" id="IPR024949">
    <property type="entry name" value="Bet_v_I_allergen"/>
</dbReference>
<dbReference type="InterPro" id="IPR050279">
    <property type="entry name" value="Plant_def-hormone_signal"/>
</dbReference>
<dbReference type="InterPro" id="IPR023393">
    <property type="entry name" value="START-like_dom_sf"/>
</dbReference>
<dbReference type="PANTHER" id="PTHR31213">
    <property type="entry name" value="OS08G0374000 PROTEIN-RELATED"/>
    <property type="match status" value="1"/>
</dbReference>
<dbReference type="PANTHER" id="PTHR31213:SF55">
    <property type="entry name" value="STRESS-INDUCED PROTEIN SAM22"/>
    <property type="match status" value="1"/>
</dbReference>
<dbReference type="Pfam" id="PF00407">
    <property type="entry name" value="Bet_v_1"/>
    <property type="match status" value="1"/>
</dbReference>
<dbReference type="PRINTS" id="PR00634">
    <property type="entry name" value="BETALLERGEN"/>
</dbReference>
<dbReference type="SUPFAM" id="SSF55961">
    <property type="entry name" value="Bet v1-like"/>
    <property type="match status" value="1"/>
</dbReference>
<keyword id="KW-0020">Allergen</keyword>
<keyword id="KW-0106">Calcium</keyword>
<keyword id="KW-0963">Cytoplasm</keyword>
<keyword id="KW-0378">Hydrolase</keyword>
<keyword id="KW-0479">Metal-binding</keyword>
<keyword id="KW-0540">Nuclease</keyword>
<keyword id="KW-0568">Pathogenesis-related protein</keyword>
<keyword id="KW-0611">Plant defense</keyword>
<accession>Q7Y1W5</accession>
<sequence>MGIFTFEDESTTTVAPARLYKALVKDADTIIPKAVEAIQSVEIVEGNGGPGTIKKLTLIEGGETKYVLHKIEAIDEANFGYNYSIVGGIGLPDTIEKISFETKLFEGANGGSIGKVTIKIETKGDAQPNEEEGKAAKARGDAFFKAIENYLIAHPEY</sequence>
<evidence type="ECO:0000250" key="1">
    <source>
        <dbReference type="UniProtKB" id="P52779"/>
    </source>
</evidence>
<evidence type="ECO:0000250" key="2">
    <source>
        <dbReference type="UniProtKB" id="Q9LLQ2"/>
    </source>
</evidence>
<evidence type="ECO:0000303" key="3">
    <source ref="1"/>
</evidence>
<evidence type="ECO:0000305" key="4"/>
<feature type="chain" id="PRO_0000445933" description="Class 10 plant pathogenesis-related protein 2E">
    <location>
        <begin position="1"/>
        <end position="157"/>
    </location>
</feature>
<feature type="binding site" evidence="2">
    <location>
        <position position="8"/>
    </location>
    <ligand>
        <name>trans-zeatin</name>
        <dbReference type="ChEBI" id="CHEBI:16522"/>
        <label>1</label>
    </ligand>
</feature>
<feature type="binding site" evidence="2">
    <location>
        <position position="32"/>
    </location>
    <ligand>
        <name>Ca(2+)</name>
        <dbReference type="ChEBI" id="CHEBI:29108"/>
    </ligand>
</feature>
<feature type="binding site" evidence="2">
    <location>
        <position position="35"/>
    </location>
    <ligand>
        <name>Ca(2+)</name>
        <dbReference type="ChEBI" id="CHEBI:29108"/>
    </ligand>
</feature>
<feature type="binding site" evidence="2">
    <location>
        <position position="38"/>
    </location>
    <ligand>
        <name>Ca(2+)</name>
        <dbReference type="ChEBI" id="CHEBI:29108"/>
    </ligand>
</feature>
<feature type="binding site" evidence="2">
    <location>
        <position position="60"/>
    </location>
    <ligand>
        <name>trans-zeatin</name>
        <dbReference type="ChEBI" id="CHEBI:16522"/>
        <label>2</label>
    </ligand>
</feature>
<feature type="binding site" evidence="2">
    <location>
        <position position="69"/>
    </location>
    <ligand>
        <name>trans-zeatin</name>
        <dbReference type="ChEBI" id="CHEBI:16522"/>
        <label>3</label>
    </ligand>
</feature>
<feature type="binding site" evidence="2">
    <location>
        <position position="81"/>
    </location>
    <ligand>
        <name>trans-zeatin</name>
        <dbReference type="ChEBI" id="CHEBI:16522"/>
        <label>3</label>
    </ligand>
</feature>
<feature type="binding site" evidence="2">
    <location>
        <position position="83"/>
    </location>
    <ligand>
        <name>trans-zeatin</name>
        <dbReference type="ChEBI" id="CHEBI:16522"/>
        <label>1</label>
    </ligand>
</feature>
<name>P102E_LUPLU</name>
<organism>
    <name type="scientific">Lupinus luteus</name>
    <name type="common">European yellow lupine</name>
    <dbReference type="NCBI Taxonomy" id="3873"/>
    <lineage>
        <taxon>Eukaryota</taxon>
        <taxon>Viridiplantae</taxon>
        <taxon>Streptophyta</taxon>
        <taxon>Embryophyta</taxon>
        <taxon>Tracheophyta</taxon>
        <taxon>Spermatophyta</taxon>
        <taxon>Magnoliopsida</taxon>
        <taxon>eudicotyledons</taxon>
        <taxon>Gunneridae</taxon>
        <taxon>Pentapetalae</taxon>
        <taxon>rosids</taxon>
        <taxon>fabids</taxon>
        <taxon>Fabales</taxon>
        <taxon>Fabaceae</taxon>
        <taxon>Papilionoideae</taxon>
        <taxon>50 kb inversion clade</taxon>
        <taxon>genistoids sensu lato</taxon>
        <taxon>core genistoids</taxon>
        <taxon>Genisteae</taxon>
        <taxon>Lupinus</taxon>
    </lineage>
</organism>
<reference key="1">
    <citation type="submission" date="2003-05" db="EMBL/GenBank/DDBJ databases">
        <title>Yellow lupine pathogenesis-related protein of subclass PR10.2.</title>
        <authorList>
            <person name="Podkowinski J."/>
            <person name="Kisiel A."/>
            <person name="Grabowska B."/>
            <person name="Legocki A.B."/>
        </authorList>
    </citation>
    <scope>NUCLEOTIDE SEQUENCE [MRNA]</scope>
</reference>